<organism>
    <name type="scientific">Zea mays</name>
    <name type="common">Maize</name>
    <dbReference type="NCBI Taxonomy" id="4577"/>
    <lineage>
        <taxon>Eukaryota</taxon>
        <taxon>Viridiplantae</taxon>
        <taxon>Streptophyta</taxon>
        <taxon>Embryophyta</taxon>
        <taxon>Tracheophyta</taxon>
        <taxon>Spermatophyta</taxon>
        <taxon>Magnoliopsida</taxon>
        <taxon>Liliopsida</taxon>
        <taxon>Poales</taxon>
        <taxon>Poaceae</taxon>
        <taxon>PACMAD clade</taxon>
        <taxon>Panicoideae</taxon>
        <taxon>Andropogonodae</taxon>
        <taxon>Andropogoneae</taxon>
        <taxon>Tripsacinae</taxon>
        <taxon>Zea</taxon>
    </lineage>
</organism>
<gene>
    <name evidence="6" type="primary">AMADH2</name>
    <name evidence="6" type="synonym">ALDH10A5</name>
    <name evidence="8" type="ORF">ZEAMMB73_Zm00001d025626</name>
</gene>
<accession>C6KEM4</accession>
<accession>A0A1D6J865</accession>
<accession>B4G044</accession>
<accession>B6SWI7</accession>
<keyword id="KW-0479">Metal-binding</keyword>
<keyword id="KW-0520">NAD</keyword>
<keyword id="KW-0560">Oxidoreductase</keyword>
<keyword id="KW-1185">Reference proteome</keyword>
<keyword id="KW-0915">Sodium</keyword>
<proteinExistence type="evidence at protein level"/>
<reference key="1">
    <citation type="journal article" date="2013" name="J. Biol. Chem.">
        <title>Plant ALDH10 family: identifying critical residues for substrate specificity and trapping a thiohemiacetal intermediate.</title>
        <authorList>
            <person name="Kopecny D."/>
            <person name="Koncitikova R."/>
            <person name="Tylichova M."/>
            <person name="Vigouroux A."/>
            <person name="Moskalikova H."/>
            <person name="Soural M."/>
            <person name="Sebela M."/>
            <person name="Morera S."/>
        </authorList>
    </citation>
    <scope>NUCLEOTIDE SEQUENCE [MRNA]</scope>
    <scope>FUNCTION</scope>
    <scope>CATALYTIC ACTIVITY</scope>
    <scope>BIOPHYSICOCHEMICAL PROPERTIES</scope>
    <source>
        <tissue>Meristem</tissue>
    </source>
</reference>
<reference key="2">
    <citation type="journal article" date="2009" name="Science">
        <title>The B73 maize genome: complexity, diversity, and dynamics.</title>
        <authorList>
            <person name="Schnable P.S."/>
            <person name="Ware D."/>
            <person name="Fulton R.S."/>
            <person name="Stein J.C."/>
            <person name="Wei F."/>
            <person name="Pasternak S."/>
            <person name="Liang C."/>
            <person name="Zhang J."/>
            <person name="Fulton L."/>
            <person name="Graves T.A."/>
            <person name="Minx P."/>
            <person name="Reily A.D."/>
            <person name="Courtney L."/>
            <person name="Kruchowski S.S."/>
            <person name="Tomlinson C."/>
            <person name="Strong C."/>
            <person name="Delehaunty K."/>
            <person name="Fronick C."/>
            <person name="Courtney B."/>
            <person name="Rock S.M."/>
            <person name="Belter E."/>
            <person name="Du F."/>
            <person name="Kim K."/>
            <person name="Abbott R.M."/>
            <person name="Cotton M."/>
            <person name="Levy A."/>
            <person name="Marchetto P."/>
            <person name="Ochoa K."/>
            <person name="Jackson S.M."/>
            <person name="Gillam B."/>
            <person name="Chen W."/>
            <person name="Yan L."/>
            <person name="Higginbotham J."/>
            <person name="Cardenas M."/>
            <person name="Waligorski J."/>
            <person name="Applebaum E."/>
            <person name="Phelps L."/>
            <person name="Falcone J."/>
            <person name="Kanchi K."/>
            <person name="Thane T."/>
            <person name="Scimone A."/>
            <person name="Thane N."/>
            <person name="Henke J."/>
            <person name="Wang T."/>
            <person name="Ruppert J."/>
            <person name="Shah N."/>
            <person name="Rotter K."/>
            <person name="Hodges J."/>
            <person name="Ingenthron E."/>
            <person name="Cordes M."/>
            <person name="Kohlberg S."/>
            <person name="Sgro J."/>
            <person name="Delgado B."/>
            <person name="Mead K."/>
            <person name="Chinwalla A."/>
            <person name="Leonard S."/>
            <person name="Crouse K."/>
            <person name="Collura K."/>
            <person name="Kudrna D."/>
            <person name="Currie J."/>
            <person name="He R."/>
            <person name="Angelova A."/>
            <person name="Rajasekar S."/>
            <person name="Mueller T."/>
            <person name="Lomeli R."/>
            <person name="Scara G."/>
            <person name="Ko A."/>
            <person name="Delaney K."/>
            <person name="Wissotski M."/>
            <person name="Lopez G."/>
            <person name="Campos D."/>
            <person name="Braidotti M."/>
            <person name="Ashley E."/>
            <person name="Golser W."/>
            <person name="Kim H."/>
            <person name="Lee S."/>
            <person name="Lin J."/>
            <person name="Dujmic Z."/>
            <person name="Kim W."/>
            <person name="Talag J."/>
            <person name="Zuccolo A."/>
            <person name="Fan C."/>
            <person name="Sebastian A."/>
            <person name="Kramer M."/>
            <person name="Spiegel L."/>
            <person name="Nascimento L."/>
            <person name="Zutavern T."/>
            <person name="Miller B."/>
            <person name="Ambroise C."/>
            <person name="Muller S."/>
            <person name="Spooner W."/>
            <person name="Narechania A."/>
            <person name="Ren L."/>
            <person name="Wei S."/>
            <person name="Kumari S."/>
            <person name="Faga B."/>
            <person name="Levy M.J."/>
            <person name="McMahan L."/>
            <person name="Van Buren P."/>
            <person name="Vaughn M.W."/>
            <person name="Ying K."/>
            <person name="Yeh C.-T."/>
            <person name="Emrich S.J."/>
            <person name="Jia Y."/>
            <person name="Kalyanaraman A."/>
            <person name="Hsia A.-P."/>
            <person name="Barbazuk W.B."/>
            <person name="Baucom R.S."/>
            <person name="Brutnell T.P."/>
            <person name="Carpita N.C."/>
            <person name="Chaparro C."/>
            <person name="Chia J.-M."/>
            <person name="Deragon J.-M."/>
            <person name="Estill J.C."/>
            <person name="Fu Y."/>
            <person name="Jeddeloh J.A."/>
            <person name="Han Y."/>
            <person name="Lee H."/>
            <person name="Li P."/>
            <person name="Lisch D.R."/>
            <person name="Liu S."/>
            <person name="Liu Z."/>
            <person name="Nagel D.H."/>
            <person name="McCann M.C."/>
            <person name="SanMiguel P."/>
            <person name="Myers A.M."/>
            <person name="Nettleton D."/>
            <person name="Nguyen J."/>
            <person name="Penning B.W."/>
            <person name="Ponnala L."/>
            <person name="Schneider K.L."/>
            <person name="Schwartz D.C."/>
            <person name="Sharma A."/>
            <person name="Soderlund C."/>
            <person name="Springer N.M."/>
            <person name="Sun Q."/>
            <person name="Wang H."/>
            <person name="Waterman M."/>
            <person name="Westerman R."/>
            <person name="Wolfgruber T.K."/>
            <person name="Yang L."/>
            <person name="Yu Y."/>
            <person name="Zhang L."/>
            <person name="Zhou S."/>
            <person name="Zhu Q."/>
            <person name="Bennetzen J.L."/>
            <person name="Dawe R.K."/>
            <person name="Jiang J."/>
            <person name="Jiang N."/>
            <person name="Presting G.G."/>
            <person name="Wessler S.R."/>
            <person name="Aluru S."/>
            <person name="Martienssen R.A."/>
            <person name="Clifton S.W."/>
            <person name="McCombie W.R."/>
            <person name="Wing R.A."/>
            <person name="Wilson R.K."/>
        </authorList>
    </citation>
    <scope>NUCLEOTIDE SEQUENCE [LARGE SCALE GENOMIC DNA]</scope>
    <source>
        <strain>cv. B73</strain>
    </source>
</reference>
<reference key="3">
    <citation type="journal article" date="2009" name="Plant Mol. Biol.">
        <title>Insights into corn genes derived from large-scale cDNA sequencing.</title>
        <authorList>
            <person name="Alexandrov N.N."/>
            <person name="Brover V.V."/>
            <person name="Freidin S."/>
            <person name="Troukhan M.E."/>
            <person name="Tatarinova T.V."/>
            <person name="Zhang H."/>
            <person name="Swaller T.J."/>
            <person name="Lu Y.-P."/>
            <person name="Bouck J."/>
            <person name="Flavell R.B."/>
            <person name="Feldmann K.A."/>
        </authorList>
    </citation>
    <scope>NUCLEOTIDE SEQUENCE [LARGE SCALE MRNA]</scope>
</reference>
<reference key="4">
    <citation type="journal article" date="2009" name="PLoS Genet.">
        <title>Sequencing, mapping, and analysis of 27,455 maize full-length cDNAs.</title>
        <authorList>
            <person name="Soderlund C."/>
            <person name="Descour A."/>
            <person name="Kudrna D."/>
            <person name="Bomhoff M."/>
            <person name="Boyd L."/>
            <person name="Currie J."/>
            <person name="Angelova A."/>
            <person name="Collura K."/>
            <person name="Wissotski M."/>
            <person name="Ashley E."/>
            <person name="Morrow D."/>
            <person name="Fernandes J."/>
            <person name="Walbot V."/>
            <person name="Yu Y."/>
        </authorList>
    </citation>
    <scope>NUCLEOTIDE SEQUENCE [LARGE SCALE MRNA]</scope>
    <source>
        <strain>cv. B73</strain>
        <tissue>Seedling</tissue>
    </source>
</reference>
<name>AADH2_MAIZE</name>
<feature type="chain" id="PRO_0000454137" description="Aminoaldehyde dehydrogenase 2">
    <location>
        <begin position="1"/>
        <end position="506"/>
    </location>
</feature>
<feature type="active site" description="Proton acceptor" evidence="3">
    <location>
        <position position="262"/>
    </location>
</feature>
<feature type="active site" description="Nucleophile" evidence="4">
    <location>
        <position position="297"/>
    </location>
</feature>
<feature type="binding site" evidence="1">
    <location>
        <position position="101"/>
    </location>
    <ligand>
        <name>Na(+)</name>
        <dbReference type="ChEBI" id="CHEBI:29101"/>
    </ligand>
</feature>
<feature type="binding site" evidence="1">
    <location>
        <begin position="161"/>
        <end position="163"/>
    </location>
    <ligand>
        <name>NAD(+)</name>
        <dbReference type="ChEBI" id="CHEBI:57540"/>
    </ligand>
</feature>
<feature type="binding site" evidence="1">
    <location>
        <begin position="187"/>
        <end position="190"/>
    </location>
    <ligand>
        <name>NAD(+)</name>
        <dbReference type="ChEBI" id="CHEBI:57540"/>
    </ligand>
</feature>
<feature type="binding site" evidence="1">
    <location>
        <position position="191"/>
    </location>
    <ligand>
        <name>Na(+)</name>
        <dbReference type="ChEBI" id="CHEBI:29101"/>
    </ligand>
</feature>
<feature type="binding site" evidence="1">
    <location>
        <begin position="241"/>
        <end position="244"/>
    </location>
    <ligand>
        <name>NAD(+)</name>
        <dbReference type="ChEBI" id="CHEBI:57540"/>
    </ligand>
</feature>
<feature type="binding site" evidence="1">
    <location>
        <position position="262"/>
    </location>
    <ligand>
        <name>NAD(+)</name>
        <dbReference type="ChEBI" id="CHEBI:57540"/>
    </ligand>
</feature>
<feature type="binding site" evidence="1">
    <location>
        <position position="396"/>
    </location>
    <ligand>
        <name>NAD(+)</name>
        <dbReference type="ChEBI" id="CHEBI:57540"/>
    </ligand>
</feature>
<feature type="binding site" evidence="1">
    <location>
        <position position="462"/>
    </location>
    <ligand>
        <name>NAD(+)</name>
        <dbReference type="ChEBI" id="CHEBI:57540"/>
    </ligand>
</feature>
<feature type="site" description="Transition state stabilizer" evidence="2">
    <location>
        <position position="164"/>
    </location>
</feature>
<feature type="sequence conflict" description="In Ref. 1; ACS74868." ref="1">
    <original>H</original>
    <variation>Q</variation>
    <location>
        <position position="67"/>
    </location>
</feature>
<feature type="sequence conflict" description="In Ref. 1; ACS74868." evidence="7" ref="1">
    <original>Q</original>
    <variation>R</variation>
    <location>
        <position position="135"/>
    </location>
</feature>
<feature type="sequence conflict" description="In Ref. 3; ACG29220." evidence="7" ref="3">
    <original>I</original>
    <variation>T</variation>
    <location>
        <position position="202"/>
    </location>
</feature>
<feature type="sequence conflict" description="In Ref. 1; ACS74868 and 3; ACG29220." evidence="7" ref="1 3">
    <original>I</original>
    <variation>T</variation>
    <location>
        <position position="250"/>
    </location>
</feature>
<feature type="sequence conflict" description="In Ref. 3; ACG29220." evidence="7" ref="3">
    <original>D</original>
    <variation>G</variation>
    <location>
        <position position="274"/>
    </location>
</feature>
<feature type="sequence conflict" description="In Ref. 1; ACS74868." evidence="7" ref="1">
    <original>E</original>
    <variation>D</variation>
    <location>
        <position position="410"/>
    </location>
</feature>
<feature type="sequence conflict" description="In Ref. 3; ACG29220." evidence="7" ref="3">
    <original>A</original>
    <variation>P</variation>
    <location>
        <position position="442"/>
    </location>
</feature>
<protein>
    <recommendedName>
        <fullName evidence="6">Aminoaldehyde dehydrogenase 2</fullName>
        <shortName evidence="6">ZmAMADH2</shortName>
        <ecNumber evidence="5">1.2.1.-</ecNumber>
    </recommendedName>
    <alternativeName>
        <fullName evidence="7">4-trimethylammoniobutyraldehyde dehydrogenase AMADH2</fullName>
        <ecNumber evidence="5">1.2.1.47</ecNumber>
    </alternativeName>
    <alternativeName>
        <fullName evidence="7">Aminobutyraldehyde dehydrogenase AMADH2</fullName>
        <ecNumber evidence="5">1.2.1.19</ecNumber>
    </alternativeName>
    <alternativeName>
        <fullName evidence="7">Gamma-guanidinobutyraldehyde dehydrogenase AMADH2</fullName>
        <ecNumber evidence="5">1.2.1.54</ecNumber>
    </alternativeName>
</protein>
<sequence>MAPPQTIPRRGLFIGGAWREPCLGRRLPVVNPATEATIGDIPAGTAEDVEIAVAAARDAFSRDGGRHWSRAPGAVRANFLRAIAAKIKDRKSELALLETLDSGKPLDEASGDMDDVAACFEYYADLAEALDGKQQSPISLPMENFKSYVLKEPIGVVGLITPWNYPLLMATWKVAPALAAGCTTILKPSELASVSCLELGAICMEIGLPPGVLNIITGLGPEAGAPLSSHSHVDKVAFTGSTETGKRIMISAAQMVKPVSLELGGKSPLIVFDDIGDIDKAVEWTMFGIFANAGQVCSATSRLLLHEKIAKKFLDRLVAWAKNIKVSDPLEEGCRLGSVISEGQYEKIKKFISTARSEGATILYGGGRPQHLRRGFFLEPTIITDVSTSMQIWQEEVFGPVICVKEFRTESEAVELANDTHYGLAGAVISNDQERCERISKALHSGIIWINCSQPCFVQAPWGGNKRSGFGRELGEWGLDNYLTVKQVTKYCSDEPWGWYQPPSKL</sequence>
<comment type="function">
    <text evidence="5 7">Dehydrogenase that catalyzes the oxidation of several aminoaldehydes (PubMed:23408433). Metabolizes and detoxifies aldehyde products of polyamine degradation to non-toxic amino acids (Probable). Catalyzes the oxidation of 4-aminobutanal and 3-aminopropanal to 4-aminobutanoate and beta-alanine, respectively (PubMed:23408433). Catalyzes the oxidation of 4-(trimethylamino)butanal and 4-guanidinobutanal to 4-trimethylammoniobutanoate and 4-guanidinobutanoate, respectively (PubMed:23408433).</text>
</comment>
<comment type="catalytic activity">
    <reaction evidence="5">
        <text>4-aminobutanal + NAD(+) + H2O = 4-aminobutanoate + NADH + 2 H(+)</text>
        <dbReference type="Rhea" id="RHEA:19105"/>
        <dbReference type="ChEBI" id="CHEBI:15377"/>
        <dbReference type="ChEBI" id="CHEBI:15378"/>
        <dbReference type="ChEBI" id="CHEBI:57540"/>
        <dbReference type="ChEBI" id="CHEBI:57945"/>
        <dbReference type="ChEBI" id="CHEBI:58264"/>
        <dbReference type="ChEBI" id="CHEBI:59888"/>
        <dbReference type="EC" id="1.2.1.19"/>
    </reaction>
    <physiologicalReaction direction="left-to-right" evidence="5">
        <dbReference type="Rhea" id="RHEA:19106"/>
    </physiologicalReaction>
</comment>
<comment type="catalytic activity">
    <reaction evidence="5">
        <text>3-aminopropanal + NAD(+) + H2O = beta-alanine + NADH + 2 H(+)</text>
        <dbReference type="Rhea" id="RHEA:30695"/>
        <dbReference type="ChEBI" id="CHEBI:15377"/>
        <dbReference type="ChEBI" id="CHEBI:15378"/>
        <dbReference type="ChEBI" id="CHEBI:57540"/>
        <dbReference type="ChEBI" id="CHEBI:57945"/>
        <dbReference type="ChEBI" id="CHEBI:57966"/>
        <dbReference type="ChEBI" id="CHEBI:58374"/>
    </reaction>
    <physiologicalReaction direction="left-to-right" evidence="5">
        <dbReference type="Rhea" id="RHEA:30696"/>
    </physiologicalReaction>
</comment>
<comment type="catalytic activity">
    <reaction evidence="5">
        <text>4-(trimethylamino)butanal + NAD(+) + H2O = 4-(trimethylamino)butanoate + NADH + 2 H(+)</text>
        <dbReference type="Rhea" id="RHEA:17985"/>
        <dbReference type="ChEBI" id="CHEBI:15377"/>
        <dbReference type="ChEBI" id="CHEBI:15378"/>
        <dbReference type="ChEBI" id="CHEBI:16244"/>
        <dbReference type="ChEBI" id="CHEBI:18020"/>
        <dbReference type="ChEBI" id="CHEBI:57540"/>
        <dbReference type="ChEBI" id="CHEBI:57945"/>
        <dbReference type="EC" id="1.2.1.47"/>
    </reaction>
    <physiologicalReaction direction="left-to-right" evidence="5">
        <dbReference type="Rhea" id="RHEA:17986"/>
    </physiologicalReaction>
</comment>
<comment type="catalytic activity">
    <reaction evidence="5">
        <text>4-guanidinobutanal + NAD(+) + H2O = 4-guanidinobutanoate + NADH + 2 H(+)</text>
        <dbReference type="Rhea" id="RHEA:14381"/>
        <dbReference type="ChEBI" id="CHEBI:15377"/>
        <dbReference type="ChEBI" id="CHEBI:15378"/>
        <dbReference type="ChEBI" id="CHEBI:57486"/>
        <dbReference type="ChEBI" id="CHEBI:57540"/>
        <dbReference type="ChEBI" id="CHEBI:57854"/>
        <dbReference type="ChEBI" id="CHEBI:57945"/>
        <dbReference type="EC" id="1.2.1.54"/>
    </reaction>
    <physiologicalReaction direction="left-to-right" evidence="5">
        <dbReference type="Rhea" id="RHEA:14382"/>
    </physiologicalReaction>
</comment>
<comment type="biophysicochemical properties">
    <kinetics>
        <KM evidence="5">59 uM for 4-aminobutanal</KM>
        <KM evidence="5">98 uM for 3-aminopropanal</KM>
        <KM evidence="5">16 uM for 4-(trimethylamino)butanal</KM>
        <KM evidence="5">11 uM for 4-guanidinobutanal</KM>
        <KM evidence="5">86 uM for NAD(+) with 3-aminopropanal as substrate</KM>
    </kinetics>
</comment>
<comment type="pathway">
    <text evidence="7">Amine and polyamine biosynthesis; betaine biosynthesis via choline pathway; betaine from betaine aldehyde: step 1/1.</text>
</comment>
<comment type="similarity">
    <text evidence="7">Belongs to the aldehyde dehydrogenase family.</text>
</comment>
<comment type="sequence caution" evidence="7">
    <conflict type="erroneous initiation">
        <sequence resource="EMBL-CDS" id="AQK44109"/>
    </conflict>
    <text>Truncated N-terminus.</text>
</comment>
<dbReference type="EC" id="1.2.1.-" evidence="5"/>
<dbReference type="EC" id="1.2.1.47" evidence="5"/>
<dbReference type="EC" id="1.2.1.19" evidence="5"/>
<dbReference type="EC" id="1.2.1.54" evidence="5"/>
<dbReference type="EMBL" id="GQ184594">
    <property type="protein sequence ID" value="ACS74868.1"/>
    <property type="molecule type" value="mRNA"/>
</dbReference>
<dbReference type="EMBL" id="CM000786">
    <property type="protein sequence ID" value="AQK44108.1"/>
    <property type="molecule type" value="Genomic_DNA"/>
</dbReference>
<dbReference type="EMBL" id="CM000786">
    <property type="protein sequence ID" value="AQK44109.1"/>
    <property type="status" value="ALT_INIT"/>
    <property type="molecule type" value="Genomic_DNA"/>
</dbReference>
<dbReference type="EMBL" id="EU957102">
    <property type="protein sequence ID" value="ACG29220.1"/>
    <property type="molecule type" value="mRNA"/>
</dbReference>
<dbReference type="EMBL" id="BT042732">
    <property type="protein sequence ID" value="ACF87737.1"/>
    <property type="molecule type" value="mRNA"/>
</dbReference>
<dbReference type="EMBL" id="BT067636">
    <property type="protein sequence ID" value="ACN34533.1"/>
    <property type="molecule type" value="mRNA"/>
</dbReference>
<dbReference type="RefSeq" id="NP_001157804.1">
    <property type="nucleotide sequence ID" value="NM_001164332.1"/>
</dbReference>
<dbReference type="SMR" id="C6KEM4"/>
<dbReference type="FunCoup" id="C6KEM4">
    <property type="interactions" value="20"/>
</dbReference>
<dbReference type="IntAct" id="C6KEM4">
    <property type="interactions" value="4"/>
</dbReference>
<dbReference type="STRING" id="4577.B4G044"/>
<dbReference type="PaxDb" id="4577-GRMZM2G135470_P01"/>
<dbReference type="EnsemblPlants" id="Zm00001eb424410_T001">
    <property type="protein sequence ID" value="Zm00001eb424410_P001"/>
    <property type="gene ID" value="Zm00001eb424410"/>
</dbReference>
<dbReference type="GeneID" id="541949"/>
<dbReference type="Gramene" id="Zm00001eb424410_T001">
    <property type="protein sequence ID" value="Zm00001eb424410_P001"/>
    <property type="gene ID" value="Zm00001eb424410"/>
</dbReference>
<dbReference type="KEGG" id="zma:541949"/>
<dbReference type="eggNOG" id="KOG2450">
    <property type="taxonomic scope" value="Eukaryota"/>
</dbReference>
<dbReference type="HOGENOM" id="CLU_005391_0_1_1"/>
<dbReference type="InParanoid" id="C6KEM4"/>
<dbReference type="OMA" id="WTRMLVH"/>
<dbReference type="OrthoDB" id="310895at2759"/>
<dbReference type="BRENDA" id="1.2.1.19">
    <property type="organism ID" value="6752"/>
</dbReference>
<dbReference type="UniPathway" id="UPA00529">
    <property type="reaction ID" value="UER00386"/>
</dbReference>
<dbReference type="Proteomes" id="UP000007305">
    <property type="component" value="Chromosome 10"/>
</dbReference>
<dbReference type="ExpressionAtlas" id="C6KEM4">
    <property type="expression patterns" value="baseline and differential"/>
</dbReference>
<dbReference type="GO" id="GO:0005777">
    <property type="term" value="C:peroxisome"/>
    <property type="evidence" value="ECO:0007669"/>
    <property type="project" value="EnsemblPlants"/>
</dbReference>
<dbReference type="GO" id="GO:0102244">
    <property type="term" value="F:3-aminopropanal dehydrogenase (NAD+) activity"/>
    <property type="evidence" value="ECO:0007669"/>
    <property type="project" value="RHEA"/>
</dbReference>
<dbReference type="GO" id="GO:0047105">
    <property type="term" value="F:4-trimethylammoniobutyraldehyde dehydrogenase activity"/>
    <property type="evidence" value="ECO:0000314"/>
    <property type="project" value="UniProtKB"/>
</dbReference>
<dbReference type="GO" id="GO:0019145">
    <property type="term" value="F:aminobutyraldehyde dehydrogenase (NAD+) activity"/>
    <property type="evidence" value="ECO:0000314"/>
    <property type="project" value="UniProtKB"/>
</dbReference>
<dbReference type="GO" id="GO:0008802">
    <property type="term" value="F:betaine-aldehyde dehydrogenase (NAD+) activity"/>
    <property type="evidence" value="ECO:0007669"/>
    <property type="project" value="EnsemblPlants"/>
</dbReference>
<dbReference type="GO" id="GO:0047107">
    <property type="term" value="F:gamma-guanidinobutyraldehyde dehydrogenase (NAD+) activity"/>
    <property type="evidence" value="ECO:0000314"/>
    <property type="project" value="UniProtKB"/>
</dbReference>
<dbReference type="GO" id="GO:0042803">
    <property type="term" value="F:protein homodimerization activity"/>
    <property type="evidence" value="ECO:0000250"/>
    <property type="project" value="UniProtKB"/>
</dbReference>
<dbReference type="GO" id="GO:0031402">
    <property type="term" value="F:sodium ion binding"/>
    <property type="evidence" value="ECO:0000250"/>
    <property type="project" value="UniProtKB"/>
</dbReference>
<dbReference type="GO" id="GO:0110095">
    <property type="term" value="P:cellular detoxification of aldehyde"/>
    <property type="evidence" value="ECO:0000314"/>
    <property type="project" value="UniProtKB"/>
</dbReference>
<dbReference type="GO" id="GO:0071454">
    <property type="term" value="P:cellular response to anoxia"/>
    <property type="evidence" value="ECO:0007669"/>
    <property type="project" value="EnsemblPlants"/>
</dbReference>
<dbReference type="GO" id="GO:0019285">
    <property type="term" value="P:glycine betaine biosynthetic process from choline"/>
    <property type="evidence" value="ECO:0007669"/>
    <property type="project" value="UniProtKB-UniPathway"/>
</dbReference>
<dbReference type="CDD" id="cd07110">
    <property type="entry name" value="ALDH_F10_BADH"/>
    <property type="match status" value="1"/>
</dbReference>
<dbReference type="FunFam" id="3.40.309.10:FF:000012">
    <property type="entry name" value="Betaine aldehyde dehydrogenase"/>
    <property type="match status" value="1"/>
</dbReference>
<dbReference type="FunFam" id="3.40.605.10:FF:000007">
    <property type="entry name" value="NAD/NADP-dependent betaine aldehyde dehydrogenase"/>
    <property type="match status" value="1"/>
</dbReference>
<dbReference type="Gene3D" id="3.40.605.10">
    <property type="entry name" value="Aldehyde Dehydrogenase, Chain A, domain 1"/>
    <property type="match status" value="1"/>
</dbReference>
<dbReference type="Gene3D" id="3.40.309.10">
    <property type="entry name" value="Aldehyde Dehydrogenase, Chain A, domain 2"/>
    <property type="match status" value="1"/>
</dbReference>
<dbReference type="InterPro" id="IPR016161">
    <property type="entry name" value="Ald_DH/histidinol_DH"/>
</dbReference>
<dbReference type="InterPro" id="IPR016163">
    <property type="entry name" value="Ald_DH_C"/>
</dbReference>
<dbReference type="InterPro" id="IPR016160">
    <property type="entry name" value="Ald_DH_CS_CYS"/>
</dbReference>
<dbReference type="InterPro" id="IPR029510">
    <property type="entry name" value="Ald_DH_CS_GLU"/>
</dbReference>
<dbReference type="InterPro" id="IPR016162">
    <property type="entry name" value="Ald_DH_N"/>
</dbReference>
<dbReference type="InterPro" id="IPR015590">
    <property type="entry name" value="Aldehyde_DH_dom"/>
</dbReference>
<dbReference type="PANTHER" id="PTHR43860">
    <property type="entry name" value="BETAINE ALDEHYDE DEHYDROGENASE"/>
    <property type="match status" value="1"/>
</dbReference>
<dbReference type="PANTHER" id="PTHR43860:SF7">
    <property type="entry name" value="BETAINE ALDEHYDE DEHYDROGENASE 1"/>
    <property type="match status" value="1"/>
</dbReference>
<dbReference type="Pfam" id="PF00171">
    <property type="entry name" value="Aldedh"/>
    <property type="match status" value="1"/>
</dbReference>
<dbReference type="SUPFAM" id="SSF53720">
    <property type="entry name" value="ALDH-like"/>
    <property type="match status" value="1"/>
</dbReference>
<dbReference type="PROSITE" id="PS00070">
    <property type="entry name" value="ALDEHYDE_DEHYDR_CYS"/>
    <property type="match status" value="1"/>
</dbReference>
<dbReference type="PROSITE" id="PS00687">
    <property type="entry name" value="ALDEHYDE_DEHYDR_GLU"/>
    <property type="match status" value="1"/>
</dbReference>
<evidence type="ECO:0000250" key="1">
    <source>
        <dbReference type="UniProtKB" id="C0P9J6"/>
    </source>
</evidence>
<evidence type="ECO:0000250" key="2">
    <source>
        <dbReference type="UniProtKB" id="P20000"/>
    </source>
</evidence>
<evidence type="ECO:0000255" key="3">
    <source>
        <dbReference type="PROSITE-ProRule" id="PRU10007"/>
    </source>
</evidence>
<evidence type="ECO:0000255" key="4">
    <source>
        <dbReference type="PROSITE-ProRule" id="PRU10008"/>
    </source>
</evidence>
<evidence type="ECO:0000269" key="5">
    <source>
    </source>
</evidence>
<evidence type="ECO:0000303" key="6">
    <source>
    </source>
</evidence>
<evidence type="ECO:0000305" key="7"/>
<evidence type="ECO:0000312" key="8">
    <source>
        <dbReference type="EMBL" id="AQK44109.1"/>
    </source>
</evidence>